<sequence length="279" mass="32742">MLNCYLAFPKYDPIIFSVGRFSAHWYGLMYLIGFYFIMWSSIKRYKLISLNKEKIENILYFSFLNALIGGRIGYVIFYKTKEIFFNPYFIFKVWEGGMSFHGGLLGSIISIYYFSKKYNCKFFKISDFLVPLIPFGLGFGRIGNFINGELWGRVNTSFCFTMLFPGSYDEDVKFLLNNPHLQDVFDKYHLLPRHISQLYEMFLEGILLFIILNIFEKKKKPTGYMSGLFLILYGSFRIIAEFFRQPDPQIGLMFNYISLGQILSIPMILYGLILIINSK</sequence>
<gene>
    <name evidence="1" type="primary">lgt</name>
    <name type="ordered locus">WIGBR3190</name>
</gene>
<organism>
    <name type="scientific">Wigglesworthia glossinidia brevipalpis</name>
    <dbReference type="NCBI Taxonomy" id="36870"/>
    <lineage>
        <taxon>Bacteria</taxon>
        <taxon>Pseudomonadati</taxon>
        <taxon>Pseudomonadota</taxon>
        <taxon>Gammaproteobacteria</taxon>
        <taxon>Enterobacterales</taxon>
        <taxon>Erwiniaceae</taxon>
        <taxon>Wigglesworthia</taxon>
    </lineage>
</organism>
<keyword id="KW-1003">Cell membrane</keyword>
<keyword id="KW-0472">Membrane</keyword>
<keyword id="KW-1185">Reference proteome</keyword>
<keyword id="KW-0808">Transferase</keyword>
<keyword id="KW-0812">Transmembrane</keyword>
<keyword id="KW-1133">Transmembrane helix</keyword>
<feature type="chain" id="PRO_0000172714" description="Phosphatidylglycerol--prolipoprotein diacylglyceryl transferase">
    <location>
        <begin position="1"/>
        <end position="279"/>
    </location>
</feature>
<feature type="transmembrane region" description="Helical" evidence="1">
    <location>
        <begin position="22"/>
        <end position="42"/>
    </location>
</feature>
<feature type="transmembrane region" description="Helical" evidence="1">
    <location>
        <begin position="58"/>
        <end position="78"/>
    </location>
</feature>
<feature type="transmembrane region" description="Helical" evidence="1">
    <location>
        <begin position="89"/>
        <end position="109"/>
    </location>
</feature>
<feature type="transmembrane region" description="Helical" evidence="1">
    <location>
        <begin position="128"/>
        <end position="148"/>
    </location>
</feature>
<feature type="transmembrane region" description="Helical" evidence="1">
    <location>
        <begin position="195"/>
        <end position="215"/>
    </location>
</feature>
<feature type="transmembrane region" description="Helical" evidence="1">
    <location>
        <begin position="223"/>
        <end position="243"/>
    </location>
</feature>
<feature type="transmembrane region" description="Helical" evidence="1">
    <location>
        <begin position="256"/>
        <end position="276"/>
    </location>
</feature>
<feature type="binding site" evidence="1">
    <location>
        <position position="141"/>
    </location>
    <ligand>
        <name>a 1,2-diacyl-sn-glycero-3-phospho-(1'-sn-glycerol)</name>
        <dbReference type="ChEBI" id="CHEBI:64716"/>
    </ligand>
</feature>
<protein>
    <recommendedName>
        <fullName evidence="1">Phosphatidylglycerol--prolipoprotein diacylglyceryl transferase</fullName>
        <ecNumber evidence="1">2.5.1.145</ecNumber>
    </recommendedName>
</protein>
<comment type="function">
    <text evidence="1">Catalyzes the transfer of the diacylglyceryl group from phosphatidylglycerol to the sulfhydryl group of the N-terminal cysteine of a prolipoprotein, the first step in the formation of mature lipoproteins.</text>
</comment>
<comment type="catalytic activity">
    <reaction evidence="1">
        <text>L-cysteinyl-[prolipoprotein] + a 1,2-diacyl-sn-glycero-3-phospho-(1'-sn-glycerol) = an S-1,2-diacyl-sn-glyceryl-L-cysteinyl-[prolipoprotein] + sn-glycerol 1-phosphate + H(+)</text>
        <dbReference type="Rhea" id="RHEA:56712"/>
        <dbReference type="Rhea" id="RHEA-COMP:14679"/>
        <dbReference type="Rhea" id="RHEA-COMP:14680"/>
        <dbReference type="ChEBI" id="CHEBI:15378"/>
        <dbReference type="ChEBI" id="CHEBI:29950"/>
        <dbReference type="ChEBI" id="CHEBI:57685"/>
        <dbReference type="ChEBI" id="CHEBI:64716"/>
        <dbReference type="ChEBI" id="CHEBI:140658"/>
        <dbReference type="EC" id="2.5.1.145"/>
    </reaction>
</comment>
<comment type="pathway">
    <text evidence="1">Protein modification; lipoprotein biosynthesis (diacylglyceryl transfer).</text>
</comment>
<comment type="subcellular location">
    <subcellularLocation>
        <location evidence="1">Cell membrane</location>
        <topology evidence="1">Multi-pass membrane protein</topology>
    </subcellularLocation>
</comment>
<comment type="similarity">
    <text evidence="1">Belongs to the Lgt family.</text>
</comment>
<evidence type="ECO:0000255" key="1">
    <source>
        <dbReference type="HAMAP-Rule" id="MF_01147"/>
    </source>
</evidence>
<accession>Q8D2N5</accession>
<reference key="1">
    <citation type="journal article" date="2002" name="Nat. Genet.">
        <title>Genome sequence of the endocellular obligate symbiont of tsetse flies, Wigglesworthia glossinidia.</title>
        <authorList>
            <person name="Akman L."/>
            <person name="Yamashita A."/>
            <person name="Watanabe H."/>
            <person name="Oshima K."/>
            <person name="Shiba T."/>
            <person name="Hattori M."/>
            <person name="Aksoy S."/>
        </authorList>
    </citation>
    <scope>NUCLEOTIDE SEQUENCE [LARGE SCALE GENOMIC DNA]</scope>
</reference>
<proteinExistence type="inferred from homology"/>
<dbReference type="EC" id="2.5.1.145" evidence="1"/>
<dbReference type="EMBL" id="BA000021">
    <property type="protein sequence ID" value="BAC24465.1"/>
    <property type="molecule type" value="Genomic_DNA"/>
</dbReference>
<dbReference type="SMR" id="Q8D2N5"/>
<dbReference type="STRING" id="36870.gene:10368818"/>
<dbReference type="KEGG" id="wbr:lgt"/>
<dbReference type="eggNOG" id="COG0682">
    <property type="taxonomic scope" value="Bacteria"/>
</dbReference>
<dbReference type="HOGENOM" id="CLU_013386_1_0_6"/>
<dbReference type="OrthoDB" id="871140at2"/>
<dbReference type="UniPathway" id="UPA00664"/>
<dbReference type="Proteomes" id="UP000000562">
    <property type="component" value="Chromosome"/>
</dbReference>
<dbReference type="GO" id="GO:0005886">
    <property type="term" value="C:plasma membrane"/>
    <property type="evidence" value="ECO:0007669"/>
    <property type="project" value="UniProtKB-SubCell"/>
</dbReference>
<dbReference type="GO" id="GO:0008961">
    <property type="term" value="F:phosphatidylglycerol-prolipoprotein diacylglyceryl transferase activity"/>
    <property type="evidence" value="ECO:0007669"/>
    <property type="project" value="UniProtKB-UniRule"/>
</dbReference>
<dbReference type="GO" id="GO:0042158">
    <property type="term" value="P:lipoprotein biosynthetic process"/>
    <property type="evidence" value="ECO:0007669"/>
    <property type="project" value="UniProtKB-UniRule"/>
</dbReference>
<dbReference type="HAMAP" id="MF_01147">
    <property type="entry name" value="Lgt"/>
    <property type="match status" value="1"/>
</dbReference>
<dbReference type="InterPro" id="IPR001640">
    <property type="entry name" value="Lgt"/>
</dbReference>
<dbReference type="NCBIfam" id="TIGR00544">
    <property type="entry name" value="lgt"/>
    <property type="match status" value="1"/>
</dbReference>
<dbReference type="PANTHER" id="PTHR30589:SF0">
    <property type="entry name" value="PHOSPHATIDYLGLYCEROL--PROLIPOPROTEIN DIACYLGLYCERYL TRANSFERASE"/>
    <property type="match status" value="1"/>
</dbReference>
<dbReference type="PANTHER" id="PTHR30589">
    <property type="entry name" value="PROLIPOPROTEIN DIACYLGLYCERYL TRANSFERASE"/>
    <property type="match status" value="1"/>
</dbReference>
<dbReference type="Pfam" id="PF01790">
    <property type="entry name" value="LGT"/>
    <property type="match status" value="1"/>
</dbReference>
<dbReference type="PROSITE" id="PS01311">
    <property type="entry name" value="LGT"/>
    <property type="match status" value="1"/>
</dbReference>
<name>LGT_WIGBR</name>